<reference key="1">
    <citation type="journal article" date="1998" name="Science">
        <title>Genome sequence of an obligate intracellular pathogen of humans: Chlamydia trachomatis.</title>
        <authorList>
            <person name="Stephens R.S."/>
            <person name="Kalman S."/>
            <person name="Lammel C.J."/>
            <person name="Fan J."/>
            <person name="Marathe R."/>
            <person name="Aravind L."/>
            <person name="Mitchell W.P."/>
            <person name="Olinger L."/>
            <person name="Tatusov R.L."/>
            <person name="Zhao Q."/>
            <person name="Koonin E.V."/>
            <person name="Davis R.W."/>
        </authorList>
    </citation>
    <scope>NUCLEOTIDE SEQUENCE [LARGE SCALE GENOMIC DNA]</scope>
    <source>
        <strain>ATCC VR-885 / DSM 19411 / UW-3/Cx</strain>
    </source>
</reference>
<organism>
    <name type="scientific">Chlamydia trachomatis serovar D (strain ATCC VR-885 / DSM 19411 / UW-3/Cx)</name>
    <dbReference type="NCBI Taxonomy" id="272561"/>
    <lineage>
        <taxon>Bacteria</taxon>
        <taxon>Pseudomonadati</taxon>
        <taxon>Chlamydiota</taxon>
        <taxon>Chlamydiia</taxon>
        <taxon>Chlamydiales</taxon>
        <taxon>Chlamydiaceae</taxon>
        <taxon>Chlamydia/Chlamydophila group</taxon>
        <taxon>Chlamydia</taxon>
    </lineage>
</organism>
<keyword id="KW-0378">Hydrolase</keyword>
<keyword id="KW-0479">Metal-binding</keyword>
<keyword id="KW-0511">Multifunctional enzyme</keyword>
<keyword id="KW-0521">NADP</keyword>
<keyword id="KW-0560">Oxidoreductase</keyword>
<keyword id="KW-1185">Reference proteome</keyword>
<keyword id="KW-0686">Riboflavin biosynthesis</keyword>
<keyword id="KW-0862">Zinc</keyword>
<dbReference type="EC" id="3.5.4.26"/>
<dbReference type="EC" id="1.1.1.193"/>
<dbReference type="EMBL" id="AE001273">
    <property type="protein sequence ID" value="AAC68325.1"/>
    <property type="molecule type" value="Genomic_DNA"/>
</dbReference>
<dbReference type="PIR" id="E71479">
    <property type="entry name" value="E71479"/>
</dbReference>
<dbReference type="RefSeq" id="NP_220249.1">
    <property type="nucleotide sequence ID" value="NC_000117.1"/>
</dbReference>
<dbReference type="RefSeq" id="WP_009872107.1">
    <property type="nucleotide sequence ID" value="NC_000117.1"/>
</dbReference>
<dbReference type="SMR" id="O84735"/>
<dbReference type="FunCoup" id="O84735">
    <property type="interactions" value="251"/>
</dbReference>
<dbReference type="STRING" id="272561.CT_730"/>
<dbReference type="EnsemblBacteria" id="AAC68325">
    <property type="protein sequence ID" value="AAC68325"/>
    <property type="gene ID" value="CT_730"/>
</dbReference>
<dbReference type="GeneID" id="884520"/>
<dbReference type="KEGG" id="ctr:CT_730"/>
<dbReference type="PATRIC" id="fig|272561.5.peg.803"/>
<dbReference type="HOGENOM" id="CLU_036590_1_2_0"/>
<dbReference type="InParanoid" id="O84735"/>
<dbReference type="OrthoDB" id="9800865at2"/>
<dbReference type="UniPathway" id="UPA00275">
    <property type="reaction ID" value="UER00401"/>
</dbReference>
<dbReference type="UniPathway" id="UPA00275">
    <property type="reaction ID" value="UER00402"/>
</dbReference>
<dbReference type="Proteomes" id="UP000000431">
    <property type="component" value="Chromosome"/>
</dbReference>
<dbReference type="GO" id="GO:0008703">
    <property type="term" value="F:5-amino-6-(5-phosphoribosylamino)uracil reductase activity"/>
    <property type="evidence" value="ECO:0007669"/>
    <property type="project" value="UniProtKB-EC"/>
</dbReference>
<dbReference type="GO" id="GO:0008835">
    <property type="term" value="F:diaminohydroxyphosphoribosylaminopyrimidine deaminase activity"/>
    <property type="evidence" value="ECO:0000318"/>
    <property type="project" value="GO_Central"/>
</dbReference>
<dbReference type="GO" id="GO:0050661">
    <property type="term" value="F:NADP binding"/>
    <property type="evidence" value="ECO:0007669"/>
    <property type="project" value="InterPro"/>
</dbReference>
<dbReference type="GO" id="GO:0008270">
    <property type="term" value="F:zinc ion binding"/>
    <property type="evidence" value="ECO:0007669"/>
    <property type="project" value="InterPro"/>
</dbReference>
<dbReference type="GO" id="GO:0009231">
    <property type="term" value="P:riboflavin biosynthetic process"/>
    <property type="evidence" value="ECO:0007669"/>
    <property type="project" value="UniProtKB-UniPathway"/>
</dbReference>
<dbReference type="CDD" id="cd01284">
    <property type="entry name" value="Riboflavin_deaminase-reductase"/>
    <property type="match status" value="1"/>
</dbReference>
<dbReference type="Gene3D" id="3.40.140.10">
    <property type="entry name" value="Cytidine Deaminase, domain 2"/>
    <property type="match status" value="1"/>
</dbReference>
<dbReference type="Gene3D" id="3.40.430.10">
    <property type="entry name" value="Dihydrofolate Reductase, subunit A"/>
    <property type="match status" value="1"/>
</dbReference>
<dbReference type="InterPro" id="IPR016192">
    <property type="entry name" value="APOBEC/CMP_deaminase_Zn-bd"/>
</dbReference>
<dbReference type="InterPro" id="IPR002125">
    <property type="entry name" value="CMP_dCMP_dom"/>
</dbReference>
<dbReference type="InterPro" id="IPR016193">
    <property type="entry name" value="Cytidine_deaminase-like"/>
</dbReference>
<dbReference type="InterPro" id="IPR024072">
    <property type="entry name" value="DHFR-like_dom_sf"/>
</dbReference>
<dbReference type="InterPro" id="IPR004794">
    <property type="entry name" value="Eubact_RibD"/>
</dbReference>
<dbReference type="InterPro" id="IPR011549">
    <property type="entry name" value="RibD_C"/>
</dbReference>
<dbReference type="InterPro" id="IPR002734">
    <property type="entry name" value="RibDG_C"/>
</dbReference>
<dbReference type="InterPro" id="IPR050765">
    <property type="entry name" value="Riboflavin_Biosynth_HTPR"/>
</dbReference>
<dbReference type="NCBIfam" id="TIGR00326">
    <property type="entry name" value="eubact_ribD"/>
    <property type="match status" value="1"/>
</dbReference>
<dbReference type="NCBIfam" id="TIGR00227">
    <property type="entry name" value="ribD_Cterm"/>
    <property type="match status" value="1"/>
</dbReference>
<dbReference type="PANTHER" id="PTHR38011:SF7">
    <property type="entry name" value="2,5-DIAMINO-6-RIBOSYLAMINO-4(3H)-PYRIMIDINONE 5'-PHOSPHATE REDUCTASE"/>
    <property type="match status" value="1"/>
</dbReference>
<dbReference type="PANTHER" id="PTHR38011">
    <property type="entry name" value="DIHYDROFOLATE REDUCTASE FAMILY PROTEIN (AFU_ORTHOLOGUE AFUA_8G06820)"/>
    <property type="match status" value="1"/>
</dbReference>
<dbReference type="Pfam" id="PF00383">
    <property type="entry name" value="dCMP_cyt_deam_1"/>
    <property type="match status" value="1"/>
</dbReference>
<dbReference type="Pfam" id="PF01872">
    <property type="entry name" value="RibD_C"/>
    <property type="match status" value="1"/>
</dbReference>
<dbReference type="PIRSF" id="PIRSF006769">
    <property type="entry name" value="RibD"/>
    <property type="match status" value="1"/>
</dbReference>
<dbReference type="SUPFAM" id="SSF53927">
    <property type="entry name" value="Cytidine deaminase-like"/>
    <property type="match status" value="1"/>
</dbReference>
<dbReference type="SUPFAM" id="SSF53597">
    <property type="entry name" value="Dihydrofolate reductase-like"/>
    <property type="match status" value="1"/>
</dbReference>
<dbReference type="PROSITE" id="PS00903">
    <property type="entry name" value="CYT_DCMP_DEAMINASES_1"/>
    <property type="match status" value="1"/>
</dbReference>
<dbReference type="PROSITE" id="PS51747">
    <property type="entry name" value="CYT_DCMP_DEAMINASES_2"/>
    <property type="match status" value="1"/>
</dbReference>
<protein>
    <recommendedName>
        <fullName>Riboflavin biosynthesis protein RibD</fullName>
    </recommendedName>
    <domain>
        <recommendedName>
            <fullName>Diaminohydroxyphosphoribosylaminopyrimidine deaminase</fullName>
            <shortName>DRAP deaminase</shortName>
            <ecNumber>3.5.4.26</ecNumber>
        </recommendedName>
        <alternativeName>
            <fullName>Riboflavin-specific deaminase</fullName>
        </alternativeName>
    </domain>
    <domain>
        <recommendedName>
            <fullName>5-amino-6-(5-phosphoribosylamino)uracil reductase</fullName>
            <ecNumber>1.1.1.193</ecNumber>
        </recommendedName>
        <alternativeName>
            <fullName>HTP reductase</fullName>
        </alternativeName>
    </domain>
</protein>
<name>RIBD_CHLTR</name>
<sequence length="375" mass="41088">MEVLSEQQLFFMRKAVALGEKGRIFAPPNPWVGCVIVKNGCVIGEGWHQGIGSPHAEVCAVQDQKCSLEGAEVFVTLEPCCHFGRTPPCVDLLIKSKVAAVYVGLLDPDPRVCKKGVARLQAAGIPVYVGVGSQEAKTSLQPYLYQRERGLPWVVMKTAASLDGQTADRGGSSQWISGELARADVGKLRAESQAIIVGARTVCLDNPRLSARFPHGDLYERQPLRVVVDSRGTVPLESRVFDLSSGSTLFATTQQCPKEYIQKLKDLGVEVWESSSHQVDLKGLLRYLAERGCLQVLVEGGAQLHSAFWQQKLVNAGVIYWGPKFLGDQGQPMLRDLQLSLVTAEHVRITETSLVRDSVKTCFECLEQESVDKKG</sequence>
<feature type="chain" id="PRO_0000171719" description="Riboflavin biosynthesis protein RibD">
    <location>
        <begin position="1"/>
        <end position="375"/>
    </location>
</feature>
<feature type="domain" description="CMP/dCMP-type deaminase" evidence="2">
    <location>
        <begin position="6"/>
        <end position="127"/>
    </location>
</feature>
<feature type="region of interest" description="Deaminase">
    <location>
        <begin position="1"/>
        <end position="150"/>
    </location>
</feature>
<feature type="region of interest" description="Reductase">
    <location>
        <begin position="151"/>
        <end position="375"/>
    </location>
</feature>
<feature type="active site" description="Proton donor" evidence="1">
    <location>
        <position position="57"/>
    </location>
</feature>
<feature type="binding site" evidence="1">
    <location>
        <position position="55"/>
    </location>
    <ligand>
        <name>Zn(2+)</name>
        <dbReference type="ChEBI" id="CHEBI:29105"/>
        <note>catalytic</note>
    </ligand>
</feature>
<feature type="binding site" evidence="1">
    <location>
        <position position="80"/>
    </location>
    <ligand>
        <name>Zn(2+)</name>
        <dbReference type="ChEBI" id="CHEBI:29105"/>
        <note>catalytic</note>
    </ligand>
</feature>
<feature type="binding site" evidence="1">
    <location>
        <position position="89"/>
    </location>
    <ligand>
        <name>Zn(2+)</name>
        <dbReference type="ChEBI" id="CHEBI:29105"/>
        <note>catalytic</note>
    </ligand>
</feature>
<feature type="binding site" evidence="1">
    <location>
        <position position="159"/>
    </location>
    <ligand>
        <name>NADP(+)</name>
        <dbReference type="ChEBI" id="CHEBI:58349"/>
    </ligand>
</feature>
<feature type="binding site" evidence="1">
    <location>
        <position position="173"/>
    </location>
    <ligand>
        <name>substrate</name>
    </ligand>
</feature>
<feature type="binding site" evidence="1">
    <location>
        <position position="175"/>
    </location>
    <ligand>
        <name>NADP(+)</name>
        <dbReference type="ChEBI" id="CHEBI:58349"/>
    </ligand>
</feature>
<feature type="binding site" evidence="1">
    <location>
        <position position="189"/>
    </location>
    <ligand>
        <name>substrate</name>
    </ligand>
</feature>
<feature type="binding site" evidence="1">
    <location>
        <position position="201"/>
    </location>
    <ligand>
        <name>NADP(+)</name>
        <dbReference type="ChEBI" id="CHEBI:58349"/>
    </ligand>
</feature>
<feature type="binding site" evidence="1">
    <location>
        <position position="205"/>
    </location>
    <ligand>
        <name>NADP(+)</name>
        <dbReference type="ChEBI" id="CHEBI:58349"/>
    </ligand>
</feature>
<feature type="binding site" evidence="1">
    <location>
        <position position="209"/>
    </location>
    <ligand>
        <name>substrate</name>
    </ligand>
</feature>
<feature type="binding site" evidence="1">
    <location>
        <position position="212"/>
    </location>
    <ligand>
        <name>substrate</name>
    </ligand>
</feature>
<feature type="binding site" evidence="1">
    <location>
        <position position="230"/>
    </location>
    <ligand>
        <name>NADP(+)</name>
        <dbReference type="ChEBI" id="CHEBI:58349"/>
    </ligand>
</feature>
<feature type="binding site" evidence="1">
    <location>
        <position position="299"/>
    </location>
    <ligand>
        <name>substrate</name>
    </ligand>
</feature>
<feature type="binding site" evidence="1">
    <location>
        <begin position="301"/>
        <end position="307"/>
    </location>
    <ligand>
        <name>NADP(+)</name>
        <dbReference type="ChEBI" id="CHEBI:58349"/>
    </ligand>
</feature>
<comment type="function">
    <text>Converts 2,5-diamino-6-(ribosylamino)-4(3h)-pyrimidinone 5'-phosphate into 5-amino-6-(ribosylamino)-2,4(1h,3h)-pyrimidinedione 5'-phosphate.</text>
</comment>
<comment type="catalytic activity">
    <reaction>
        <text>2,5-diamino-6-hydroxy-4-(5-phosphoribosylamino)-pyrimidine + H2O + H(+) = 5-amino-6-(5-phospho-D-ribosylamino)uracil + NH4(+)</text>
        <dbReference type="Rhea" id="RHEA:21868"/>
        <dbReference type="ChEBI" id="CHEBI:15377"/>
        <dbReference type="ChEBI" id="CHEBI:15378"/>
        <dbReference type="ChEBI" id="CHEBI:28938"/>
        <dbReference type="ChEBI" id="CHEBI:58453"/>
        <dbReference type="ChEBI" id="CHEBI:58614"/>
        <dbReference type="EC" id="3.5.4.26"/>
    </reaction>
</comment>
<comment type="catalytic activity">
    <reaction>
        <text>5-amino-6-(5-phospho-D-ribitylamino)uracil + NADP(+) = 5-amino-6-(5-phospho-D-ribosylamino)uracil + NADPH + H(+)</text>
        <dbReference type="Rhea" id="RHEA:17845"/>
        <dbReference type="ChEBI" id="CHEBI:15378"/>
        <dbReference type="ChEBI" id="CHEBI:57783"/>
        <dbReference type="ChEBI" id="CHEBI:58349"/>
        <dbReference type="ChEBI" id="CHEBI:58421"/>
        <dbReference type="ChEBI" id="CHEBI:58453"/>
        <dbReference type="EC" id="1.1.1.193"/>
    </reaction>
</comment>
<comment type="cofactor">
    <cofactor evidence="1">
        <name>Zn(2+)</name>
        <dbReference type="ChEBI" id="CHEBI:29105"/>
    </cofactor>
    <text evidence="1">Binds 1 zinc ion.</text>
</comment>
<comment type="pathway">
    <text>Cofactor biosynthesis; riboflavin biosynthesis; 5-amino-6-(D-ribitylamino)uracil from GTP: step 2/4.</text>
</comment>
<comment type="pathway">
    <text>Cofactor biosynthesis; riboflavin biosynthesis; 5-amino-6-(D-ribitylamino)uracil from GTP: step 3/4.</text>
</comment>
<comment type="similarity">
    <text evidence="3">In the N-terminal section; belongs to the cytidine and deoxycytidylate deaminase family.</text>
</comment>
<comment type="similarity">
    <text evidence="3">In the C-terminal section; belongs to the HTP reductase family.</text>
</comment>
<evidence type="ECO:0000250" key="1"/>
<evidence type="ECO:0000255" key="2">
    <source>
        <dbReference type="PROSITE-ProRule" id="PRU01083"/>
    </source>
</evidence>
<evidence type="ECO:0000305" key="3"/>
<proteinExistence type="inferred from homology"/>
<gene>
    <name type="primary">ribD</name>
    <name type="ordered locus">CT_730</name>
</gene>
<accession>O84735</accession>